<comment type="function">
    <text evidence="1">Catalyzes the isomerization of 5-dehydro-4-deoxy-D-glucuronate to 3-deoxy-D-glycero-2,5-hexodiulosonate.</text>
</comment>
<comment type="catalytic activity">
    <reaction evidence="1">
        <text>5-dehydro-4-deoxy-D-glucuronate = 3-deoxy-D-glycero-2,5-hexodiulosonate</text>
        <dbReference type="Rhea" id="RHEA:23896"/>
        <dbReference type="ChEBI" id="CHEBI:17117"/>
        <dbReference type="ChEBI" id="CHEBI:29071"/>
        <dbReference type="EC" id="5.3.1.17"/>
    </reaction>
</comment>
<comment type="cofactor">
    <cofactor evidence="1">
        <name>Zn(2+)</name>
        <dbReference type="ChEBI" id="CHEBI:29105"/>
    </cofactor>
    <text evidence="1">Binds 1 zinc ion per subunit.</text>
</comment>
<comment type="pathway">
    <text evidence="1">Glycan metabolism; pectin degradation; 2-dehydro-3-deoxy-D-gluconate from pectin: step 4/5.</text>
</comment>
<comment type="similarity">
    <text evidence="1">Belongs to the KduI family.</text>
</comment>
<evidence type="ECO:0000255" key="1">
    <source>
        <dbReference type="HAMAP-Rule" id="MF_00687"/>
    </source>
</evidence>
<accession>A9N3I7</accession>
<name>KDUI_SALPB</name>
<keyword id="KW-0413">Isomerase</keyword>
<keyword id="KW-0479">Metal-binding</keyword>
<keyword id="KW-0862">Zinc</keyword>
<organism>
    <name type="scientific">Salmonella paratyphi B (strain ATCC BAA-1250 / SPB7)</name>
    <dbReference type="NCBI Taxonomy" id="1016998"/>
    <lineage>
        <taxon>Bacteria</taxon>
        <taxon>Pseudomonadati</taxon>
        <taxon>Pseudomonadota</taxon>
        <taxon>Gammaproteobacteria</taxon>
        <taxon>Enterobacterales</taxon>
        <taxon>Enterobacteriaceae</taxon>
        <taxon>Salmonella</taxon>
    </lineage>
</organism>
<protein>
    <recommendedName>
        <fullName evidence="1">4-deoxy-L-threo-5-hexosulose-uronate ketol-isomerase</fullName>
        <ecNumber evidence="1">5.3.1.17</ecNumber>
    </recommendedName>
    <alternativeName>
        <fullName evidence="1">5-keto-4-deoxyuronate isomerase</fullName>
    </alternativeName>
    <alternativeName>
        <fullName evidence="1">DKI isomerase</fullName>
    </alternativeName>
</protein>
<reference key="1">
    <citation type="submission" date="2007-11" db="EMBL/GenBank/DDBJ databases">
        <authorList>
            <consortium name="The Salmonella enterica serovar Paratyphi B Genome Sequencing Project"/>
            <person name="McClelland M."/>
            <person name="Sanderson E.K."/>
            <person name="Porwollik S."/>
            <person name="Spieth J."/>
            <person name="Clifton W.S."/>
            <person name="Fulton R."/>
            <person name="Cordes M."/>
            <person name="Wollam A."/>
            <person name="Shah N."/>
            <person name="Pepin K."/>
            <person name="Bhonagiri V."/>
            <person name="Nash W."/>
            <person name="Johnson M."/>
            <person name="Thiruvilangam P."/>
            <person name="Wilson R."/>
        </authorList>
    </citation>
    <scope>NUCLEOTIDE SEQUENCE [LARGE SCALE GENOMIC DNA]</scope>
    <source>
        <strain>ATCC BAA-1250 / SPB7</strain>
    </source>
</reference>
<feature type="chain" id="PRO_1000083092" description="4-deoxy-L-threo-5-hexosulose-uronate ketol-isomerase">
    <location>
        <begin position="1"/>
        <end position="278"/>
    </location>
</feature>
<feature type="binding site" evidence="1">
    <location>
        <position position="196"/>
    </location>
    <ligand>
        <name>Zn(2+)</name>
        <dbReference type="ChEBI" id="CHEBI:29105"/>
    </ligand>
</feature>
<feature type="binding site" evidence="1">
    <location>
        <position position="198"/>
    </location>
    <ligand>
        <name>Zn(2+)</name>
        <dbReference type="ChEBI" id="CHEBI:29105"/>
    </ligand>
</feature>
<feature type="binding site" evidence="1">
    <location>
        <position position="203"/>
    </location>
    <ligand>
        <name>Zn(2+)</name>
        <dbReference type="ChEBI" id="CHEBI:29105"/>
    </ligand>
</feature>
<feature type="binding site" evidence="1">
    <location>
        <position position="245"/>
    </location>
    <ligand>
        <name>Zn(2+)</name>
        <dbReference type="ChEBI" id="CHEBI:29105"/>
    </ligand>
</feature>
<dbReference type="EC" id="5.3.1.17" evidence="1"/>
<dbReference type="EMBL" id="CP000886">
    <property type="protein sequence ID" value="ABX69090.1"/>
    <property type="molecule type" value="Genomic_DNA"/>
</dbReference>
<dbReference type="RefSeq" id="WP_000383262.1">
    <property type="nucleotide sequence ID" value="NC_010102.1"/>
</dbReference>
<dbReference type="SMR" id="A9N3I7"/>
<dbReference type="KEGG" id="spq:SPAB_03757"/>
<dbReference type="PATRIC" id="fig|1016998.12.peg.3537"/>
<dbReference type="HOGENOM" id="CLU_062609_0_0_6"/>
<dbReference type="BioCyc" id="SENT1016998:SPAB_RS15295-MONOMER"/>
<dbReference type="UniPathway" id="UPA00545">
    <property type="reaction ID" value="UER00826"/>
</dbReference>
<dbReference type="Proteomes" id="UP000008556">
    <property type="component" value="Chromosome"/>
</dbReference>
<dbReference type="GO" id="GO:0008697">
    <property type="term" value="F:4-deoxy-L-threo-5-hexosulose-uronate ketol-isomerase activity"/>
    <property type="evidence" value="ECO:0007669"/>
    <property type="project" value="UniProtKB-UniRule"/>
</dbReference>
<dbReference type="GO" id="GO:0008270">
    <property type="term" value="F:zinc ion binding"/>
    <property type="evidence" value="ECO:0007669"/>
    <property type="project" value="UniProtKB-UniRule"/>
</dbReference>
<dbReference type="GO" id="GO:0019698">
    <property type="term" value="P:D-galacturonate catabolic process"/>
    <property type="evidence" value="ECO:0007669"/>
    <property type="project" value="TreeGrafter"/>
</dbReference>
<dbReference type="GO" id="GO:0042840">
    <property type="term" value="P:D-glucuronate catabolic process"/>
    <property type="evidence" value="ECO:0007669"/>
    <property type="project" value="TreeGrafter"/>
</dbReference>
<dbReference type="GO" id="GO:0045490">
    <property type="term" value="P:pectin catabolic process"/>
    <property type="evidence" value="ECO:0007669"/>
    <property type="project" value="UniProtKB-UniRule"/>
</dbReference>
<dbReference type="CDD" id="cd20491">
    <property type="entry name" value="cupin_KduI_C"/>
    <property type="match status" value="1"/>
</dbReference>
<dbReference type="CDD" id="cd20294">
    <property type="entry name" value="cupin_KduI_N"/>
    <property type="match status" value="1"/>
</dbReference>
<dbReference type="FunFam" id="2.60.120.10:FF:000018">
    <property type="entry name" value="4-deoxy-L-threo-5-hexosulose-uronate ketol-isomerase"/>
    <property type="match status" value="1"/>
</dbReference>
<dbReference type="FunFam" id="2.60.120.520:FF:000001">
    <property type="entry name" value="4-deoxy-L-threo-5-hexosulose-uronate ketol-isomerase"/>
    <property type="match status" value="1"/>
</dbReference>
<dbReference type="Gene3D" id="2.60.120.10">
    <property type="entry name" value="Jelly Rolls"/>
    <property type="match status" value="1"/>
</dbReference>
<dbReference type="Gene3D" id="2.60.120.520">
    <property type="entry name" value="pectin degrading enzyme 5-keto 4- deoxyuronate isomerase, domain 1"/>
    <property type="match status" value="1"/>
</dbReference>
<dbReference type="HAMAP" id="MF_00687">
    <property type="entry name" value="KduI"/>
    <property type="match status" value="1"/>
</dbReference>
<dbReference type="InterPro" id="IPR007045">
    <property type="entry name" value="KduI"/>
</dbReference>
<dbReference type="InterPro" id="IPR021120">
    <property type="entry name" value="KduI/IolB_isomerase"/>
</dbReference>
<dbReference type="InterPro" id="IPR027449">
    <property type="entry name" value="KduI_N"/>
</dbReference>
<dbReference type="InterPro" id="IPR014710">
    <property type="entry name" value="RmlC-like_jellyroll"/>
</dbReference>
<dbReference type="InterPro" id="IPR011051">
    <property type="entry name" value="RmlC_Cupin_sf"/>
</dbReference>
<dbReference type="NCBIfam" id="NF002091">
    <property type="entry name" value="PRK00924.1"/>
    <property type="match status" value="1"/>
</dbReference>
<dbReference type="PANTHER" id="PTHR38461">
    <property type="entry name" value="4-DEOXY-L-THREO-5-HEXOSULOSE-URONATE KETOL-ISOMERASE"/>
    <property type="match status" value="1"/>
</dbReference>
<dbReference type="PANTHER" id="PTHR38461:SF1">
    <property type="entry name" value="4-DEOXY-L-THREO-5-HEXOSULOSE-URONATE KETOL-ISOMERASE"/>
    <property type="match status" value="1"/>
</dbReference>
<dbReference type="Pfam" id="PF04962">
    <property type="entry name" value="KduI"/>
    <property type="match status" value="1"/>
</dbReference>
<dbReference type="PIRSF" id="PIRSF006625">
    <property type="entry name" value="KduI"/>
    <property type="match status" value="1"/>
</dbReference>
<dbReference type="SUPFAM" id="SSF51182">
    <property type="entry name" value="RmlC-like cupins"/>
    <property type="match status" value="1"/>
</dbReference>
<proteinExistence type="inferred from homology"/>
<sequence length="278" mass="31253">MDVRQSIHSEHAKTLDTQALRREFLIENIFVADEYTMFYSHIDRIIVGGIMPVSHSVEIGGEVGKQLGVSRLLDRRELGVINIGGAGAIIVDGQRHDIGHRDALYIGKGAKELVFVSNEASRPAKFYYNCAPAHTAYPTKKVSPADVAPVTLGDNLTSNRRTINKYFVPDVLETCQLSMGLTELAPGNLWNTMPCHTHERRMEVYLYFNMEEDSCVFHMMGQPQETRHIVMRNEQAVISPSWSIHSGVGTKAYTFIWGMVGENQVFDDMDHVAVQDLR</sequence>
<gene>
    <name evidence="1" type="primary">kduI</name>
    <name type="ordered locus">SPAB_03757</name>
</gene>